<accession>Q122D1</accession>
<keyword id="KW-0378">Hydrolase</keyword>
<keyword id="KW-1185">Reference proteome</keyword>
<keyword id="KW-0964">Secreted</keyword>
<keyword id="KW-0732">Signal</keyword>
<dbReference type="EC" id="3.1.1.22" evidence="1"/>
<dbReference type="EMBL" id="CP000316">
    <property type="protein sequence ID" value="ABE46611.1"/>
    <property type="molecule type" value="Genomic_DNA"/>
</dbReference>
<dbReference type="RefSeq" id="WP_011485596.1">
    <property type="nucleotide sequence ID" value="NC_007948.1"/>
</dbReference>
<dbReference type="STRING" id="296591.Bpro_4732"/>
<dbReference type="ESTHER" id="polsj-hboh">
    <property type="family name" value="OHBut_olig_hydro_put"/>
</dbReference>
<dbReference type="KEGG" id="pol:Bpro_4732"/>
<dbReference type="eggNOG" id="ENOG502Z8QU">
    <property type="taxonomic scope" value="Bacteria"/>
</dbReference>
<dbReference type="HOGENOM" id="CLU_420258_0_0_4"/>
<dbReference type="OrthoDB" id="4294477at2"/>
<dbReference type="UniPathway" id="UPA00863"/>
<dbReference type="Proteomes" id="UP000001983">
    <property type="component" value="Chromosome"/>
</dbReference>
<dbReference type="GO" id="GO:0005615">
    <property type="term" value="C:extracellular space"/>
    <property type="evidence" value="ECO:0007669"/>
    <property type="project" value="InterPro"/>
</dbReference>
<dbReference type="GO" id="GO:0047989">
    <property type="term" value="F:hydroxybutyrate-dimer hydrolase activity"/>
    <property type="evidence" value="ECO:0007669"/>
    <property type="project" value="UniProtKB-UniRule"/>
</dbReference>
<dbReference type="GO" id="GO:0019605">
    <property type="term" value="P:butyrate metabolic process"/>
    <property type="evidence" value="ECO:0007669"/>
    <property type="project" value="UniProtKB-UniRule"/>
</dbReference>
<dbReference type="HAMAP" id="MF_01906">
    <property type="entry name" value="3HBOH"/>
    <property type="match status" value="1"/>
</dbReference>
<dbReference type="InterPro" id="IPR016582">
    <property type="entry name" value="OHBut_olig_hydro_put"/>
</dbReference>
<dbReference type="Pfam" id="PF10605">
    <property type="entry name" value="3HBOH"/>
    <property type="match status" value="1"/>
</dbReference>
<dbReference type="PIRSF" id="PIRSF011409">
    <property type="entry name" value="HObutyrate_olig_hydrol"/>
    <property type="match status" value="1"/>
</dbReference>
<comment type="function">
    <text evidence="1">Participates in the degradation of poly-3-hydroxybutyrate (PHB). It works downstream of poly(3-hydroxybutyrate) depolymerase, hydrolyzing D(-)-3-hydroxybutyrate oligomers of various length (3HB-oligomers) into 3HB-monomers.</text>
</comment>
<comment type="catalytic activity">
    <reaction evidence="1">
        <text>(3R)-hydroxybutanoate dimer + H2O = 2 (R)-3-hydroxybutanoate + H(+)</text>
        <dbReference type="Rhea" id="RHEA:10172"/>
        <dbReference type="ChEBI" id="CHEBI:10979"/>
        <dbReference type="ChEBI" id="CHEBI:10983"/>
        <dbReference type="ChEBI" id="CHEBI:15377"/>
        <dbReference type="ChEBI" id="CHEBI:15378"/>
        <dbReference type="EC" id="3.1.1.22"/>
    </reaction>
</comment>
<comment type="pathway">
    <text evidence="1">Lipid metabolism; butanoate metabolism.</text>
</comment>
<comment type="subcellular location">
    <subcellularLocation>
        <location evidence="1">Secreted</location>
    </subcellularLocation>
</comment>
<comment type="similarity">
    <text evidence="1">Belongs to the D-(-)-3-hydroxybutyrate oligomer hydrolase family.</text>
</comment>
<evidence type="ECO:0000255" key="1">
    <source>
        <dbReference type="HAMAP-Rule" id="MF_01906"/>
    </source>
</evidence>
<name>HBOH_POLSJ</name>
<protein>
    <recommendedName>
        <fullName evidence="1">D-(-)-3-hydroxybutyrate oligomer hydrolase</fullName>
        <shortName evidence="1">3HB-oligomer hydrolase</shortName>
        <shortName evidence="1">3HBOH</shortName>
        <ecNumber evidence="1">3.1.1.22</ecNumber>
    </recommendedName>
</protein>
<proteinExistence type="inferred from homology"/>
<feature type="signal peptide" evidence="1">
    <location>
        <begin position="1"/>
        <end position="32"/>
    </location>
</feature>
<feature type="chain" id="PRO_5000117312" description="D-(-)-3-hydroxybutyrate oligomer hydrolase">
    <location>
        <begin position="33"/>
        <end position="706"/>
    </location>
</feature>
<feature type="active site" description="Charge relay system" evidence="1">
    <location>
        <position position="311"/>
    </location>
</feature>
<reference key="1">
    <citation type="journal article" date="2008" name="Appl. Environ. Microbiol.">
        <title>The genome of Polaromonas sp. strain JS666: insights into the evolution of a hydrocarbon- and xenobiotic-degrading bacterium, and features of relevance to biotechnology.</title>
        <authorList>
            <person name="Mattes T.E."/>
            <person name="Alexander A.K."/>
            <person name="Richardson P.M."/>
            <person name="Munk A.C."/>
            <person name="Han C.S."/>
            <person name="Stothard P."/>
            <person name="Coleman N.V."/>
        </authorList>
    </citation>
    <scope>NUCLEOTIDE SEQUENCE [LARGE SCALE GENOMIC DNA]</scope>
    <source>
        <strain>JS666 / ATCC BAA-500</strain>
    </source>
</reference>
<organism>
    <name type="scientific">Polaromonas sp. (strain JS666 / ATCC BAA-500)</name>
    <dbReference type="NCBI Taxonomy" id="296591"/>
    <lineage>
        <taxon>Bacteria</taxon>
        <taxon>Pseudomonadati</taxon>
        <taxon>Pseudomonadota</taxon>
        <taxon>Betaproteobacteria</taxon>
        <taxon>Burkholderiales</taxon>
        <taxon>Comamonadaceae</taxon>
        <taxon>Polaromonas</taxon>
    </lineage>
</organism>
<gene>
    <name type="ordered locus">Bpro_4732</name>
</gene>
<sequence>MTTTSKNCLTLTSIAAAVAAVLVLSACGGGSAGENINRKPTYLGTVVSVNYDGASDDLLTAGLGKTGLGATAPVAADPLNPTAAELRRIAIFNNYRALLDISVAGGYGSLYGPNVDASGVITTSEGKIAGTEYMAYSDDGTGNQNITMLVQVPTTFNPASPCIVTGTSSGSRGVYGAIGTSGEWGLKNGCAVAYTDKGTGTGIHDLQNDTVNLQRGERATATAAGKASNFTASLTSTERAAFNTATPNRFAVKHAHSQQNTEKDWGKWTLQAVEFAYFVLNENYGDAAKDGVSRLVKLKPANTIVIASSASNGAGAALAAAELDTKGLITGVAVAEPQIQVVPDTRLSVRRGASTLGGTGRSLFDYASLGNLLQPCAALASPTTNVFNTVNTTIATNRCNALQASGLIVGNTTAELAADAMARLLAAGHQPESSVLQASHYSFATPAVAVTFANSYGRFSVKDNLCGFSFAATGAAGSATPNAPVAASAAALATSFGASNGIPPTVGINIVNNNSVGGPLLDAASLSAGSVLDYNIAGALCLRELLGGSSANALKVQQGINEVLRTGDLQGKPALIVHGRADAQVPVAFSSRPYFGRNKIVEGANSRLSYIEVTNAQHFDAFLAFPGYGERFVPAHRYFIQAMDMMYANLKTGAALPASQVVRTVPRGLTGAVVNPITPANVPPIKTVPAVADQITFANNVVTVAD</sequence>